<keyword id="KW-0210">Decarboxylase</keyword>
<keyword id="KW-0456">Lyase</keyword>
<keyword id="KW-0665">Pyrimidine biosynthesis</keyword>
<organism>
    <name type="scientific">Dictyoglomus thermophilum (strain ATCC 35947 / DSM 3960 / H-6-12)</name>
    <dbReference type="NCBI Taxonomy" id="309799"/>
    <lineage>
        <taxon>Bacteria</taxon>
        <taxon>Pseudomonadati</taxon>
        <taxon>Dictyoglomota</taxon>
        <taxon>Dictyoglomia</taxon>
        <taxon>Dictyoglomales</taxon>
        <taxon>Dictyoglomaceae</taxon>
        <taxon>Dictyoglomus</taxon>
    </lineage>
</organism>
<accession>B5YFH2</accession>
<feature type="chain" id="PRO_1000164566" description="Orotidine 5'-phosphate decarboxylase">
    <location>
        <begin position="1"/>
        <end position="244"/>
    </location>
</feature>
<feature type="active site" description="Proton donor" evidence="1">
    <location>
        <position position="63"/>
    </location>
</feature>
<feature type="binding site" evidence="1">
    <location>
        <position position="12"/>
    </location>
    <ligand>
        <name>substrate</name>
    </ligand>
</feature>
<feature type="binding site" evidence="1">
    <location>
        <position position="34"/>
    </location>
    <ligand>
        <name>substrate</name>
    </ligand>
</feature>
<feature type="binding site" evidence="1">
    <location>
        <begin position="61"/>
        <end position="70"/>
    </location>
    <ligand>
        <name>substrate</name>
    </ligand>
</feature>
<feature type="binding site" evidence="1">
    <location>
        <position position="125"/>
    </location>
    <ligand>
        <name>substrate</name>
    </ligand>
</feature>
<feature type="binding site" evidence="1">
    <location>
        <position position="187"/>
    </location>
    <ligand>
        <name>substrate</name>
    </ligand>
</feature>
<feature type="binding site" evidence="1">
    <location>
        <position position="196"/>
    </location>
    <ligand>
        <name>substrate</name>
    </ligand>
</feature>
<feature type="binding site" evidence="1">
    <location>
        <position position="216"/>
    </location>
    <ligand>
        <name>substrate</name>
    </ligand>
</feature>
<feature type="binding site" evidence="1">
    <location>
        <position position="217"/>
    </location>
    <ligand>
        <name>substrate</name>
    </ligand>
</feature>
<evidence type="ECO:0000255" key="1">
    <source>
        <dbReference type="HAMAP-Rule" id="MF_01200"/>
    </source>
</evidence>
<comment type="function">
    <text evidence="1">Catalyzes the decarboxylation of orotidine 5'-monophosphate (OMP) to uridine 5'-monophosphate (UMP).</text>
</comment>
<comment type="catalytic activity">
    <reaction evidence="1">
        <text>orotidine 5'-phosphate + H(+) = UMP + CO2</text>
        <dbReference type="Rhea" id="RHEA:11596"/>
        <dbReference type="ChEBI" id="CHEBI:15378"/>
        <dbReference type="ChEBI" id="CHEBI:16526"/>
        <dbReference type="ChEBI" id="CHEBI:57538"/>
        <dbReference type="ChEBI" id="CHEBI:57865"/>
        <dbReference type="EC" id="4.1.1.23"/>
    </reaction>
</comment>
<comment type="pathway">
    <text evidence="1">Pyrimidine metabolism; UMP biosynthesis via de novo pathway; UMP from orotate: step 2/2.</text>
</comment>
<comment type="subunit">
    <text evidence="1">Homodimer.</text>
</comment>
<comment type="similarity">
    <text evidence="1">Belongs to the OMP decarboxylase family. Type 1 subfamily.</text>
</comment>
<dbReference type="EC" id="4.1.1.23" evidence="1"/>
<dbReference type="EMBL" id="CP001146">
    <property type="protein sequence ID" value="ACI18378.1"/>
    <property type="molecule type" value="Genomic_DNA"/>
</dbReference>
<dbReference type="RefSeq" id="WP_012547010.1">
    <property type="nucleotide sequence ID" value="NC_011297.1"/>
</dbReference>
<dbReference type="SMR" id="B5YFH2"/>
<dbReference type="STRING" id="309799.DICTH_1461"/>
<dbReference type="PaxDb" id="309799-DICTH_1461"/>
<dbReference type="KEGG" id="dth:DICTH_1461"/>
<dbReference type="eggNOG" id="COG0284">
    <property type="taxonomic scope" value="Bacteria"/>
</dbReference>
<dbReference type="HOGENOM" id="CLU_067069_0_0_0"/>
<dbReference type="OrthoDB" id="9806203at2"/>
<dbReference type="UniPathway" id="UPA00070">
    <property type="reaction ID" value="UER00120"/>
</dbReference>
<dbReference type="Proteomes" id="UP000001733">
    <property type="component" value="Chromosome"/>
</dbReference>
<dbReference type="GO" id="GO:0005829">
    <property type="term" value="C:cytosol"/>
    <property type="evidence" value="ECO:0007669"/>
    <property type="project" value="TreeGrafter"/>
</dbReference>
<dbReference type="GO" id="GO:0004590">
    <property type="term" value="F:orotidine-5'-phosphate decarboxylase activity"/>
    <property type="evidence" value="ECO:0007669"/>
    <property type="project" value="UniProtKB-UniRule"/>
</dbReference>
<dbReference type="GO" id="GO:0006207">
    <property type="term" value="P:'de novo' pyrimidine nucleobase biosynthetic process"/>
    <property type="evidence" value="ECO:0007669"/>
    <property type="project" value="InterPro"/>
</dbReference>
<dbReference type="GO" id="GO:0044205">
    <property type="term" value="P:'de novo' UMP biosynthetic process"/>
    <property type="evidence" value="ECO:0007669"/>
    <property type="project" value="UniProtKB-UniRule"/>
</dbReference>
<dbReference type="CDD" id="cd04725">
    <property type="entry name" value="OMP_decarboxylase_like"/>
    <property type="match status" value="1"/>
</dbReference>
<dbReference type="FunFam" id="3.20.20.70:FF:000015">
    <property type="entry name" value="Orotidine 5'-phosphate decarboxylase"/>
    <property type="match status" value="1"/>
</dbReference>
<dbReference type="Gene3D" id="3.20.20.70">
    <property type="entry name" value="Aldolase class I"/>
    <property type="match status" value="1"/>
</dbReference>
<dbReference type="HAMAP" id="MF_01200_B">
    <property type="entry name" value="OMPdecase_type1_B"/>
    <property type="match status" value="1"/>
</dbReference>
<dbReference type="InterPro" id="IPR013785">
    <property type="entry name" value="Aldolase_TIM"/>
</dbReference>
<dbReference type="InterPro" id="IPR014732">
    <property type="entry name" value="OMPdecase"/>
</dbReference>
<dbReference type="InterPro" id="IPR018089">
    <property type="entry name" value="OMPdecase_AS"/>
</dbReference>
<dbReference type="InterPro" id="IPR047596">
    <property type="entry name" value="OMPdecase_bac"/>
</dbReference>
<dbReference type="InterPro" id="IPR001754">
    <property type="entry name" value="OMPdeCOase_dom"/>
</dbReference>
<dbReference type="InterPro" id="IPR011060">
    <property type="entry name" value="RibuloseP-bd_barrel"/>
</dbReference>
<dbReference type="NCBIfam" id="NF001273">
    <property type="entry name" value="PRK00230.1"/>
    <property type="match status" value="1"/>
</dbReference>
<dbReference type="NCBIfam" id="TIGR01740">
    <property type="entry name" value="pyrF"/>
    <property type="match status" value="1"/>
</dbReference>
<dbReference type="PANTHER" id="PTHR32119">
    <property type="entry name" value="OROTIDINE 5'-PHOSPHATE DECARBOXYLASE"/>
    <property type="match status" value="1"/>
</dbReference>
<dbReference type="PANTHER" id="PTHR32119:SF2">
    <property type="entry name" value="OROTIDINE 5'-PHOSPHATE DECARBOXYLASE"/>
    <property type="match status" value="1"/>
</dbReference>
<dbReference type="Pfam" id="PF00215">
    <property type="entry name" value="OMPdecase"/>
    <property type="match status" value="1"/>
</dbReference>
<dbReference type="SMART" id="SM00934">
    <property type="entry name" value="OMPdecase"/>
    <property type="match status" value="1"/>
</dbReference>
<dbReference type="SUPFAM" id="SSF51366">
    <property type="entry name" value="Ribulose-phoshate binding barrel"/>
    <property type="match status" value="1"/>
</dbReference>
<dbReference type="PROSITE" id="PS00156">
    <property type="entry name" value="OMPDECASE"/>
    <property type="match status" value="1"/>
</dbReference>
<proteinExistence type="inferred from homology"/>
<gene>
    <name evidence="1" type="primary">pyrF</name>
    <name type="ordered locus">DICTH_1461</name>
</gene>
<name>PYRF_DICT6</name>
<protein>
    <recommendedName>
        <fullName evidence="1">Orotidine 5'-phosphate decarboxylase</fullName>
        <ecNumber evidence="1">4.1.1.23</ecNumber>
    </recommendedName>
    <alternativeName>
        <fullName evidence="1">OMP decarboxylase</fullName>
        <shortName evidence="1">OMPDCase</shortName>
        <shortName evidence="1">OMPdecase</shortName>
    </alternativeName>
</protein>
<reference key="1">
    <citation type="journal article" date="2014" name="Genome Announc.">
        <title>Complete Genome Sequence of the Extreme Thermophile Dictyoglomus thermophilum H-6-12.</title>
        <authorList>
            <person name="Coil D.A."/>
            <person name="Badger J.H."/>
            <person name="Forberger H.C."/>
            <person name="Riggs F."/>
            <person name="Madupu R."/>
            <person name="Fedorova N."/>
            <person name="Ward N."/>
            <person name="Robb F.T."/>
            <person name="Eisen J.A."/>
        </authorList>
    </citation>
    <scope>NUCLEOTIDE SEQUENCE [LARGE SCALE GENOMIC DNA]</scope>
    <source>
        <strain>ATCC 35947 / DSM 3960 / H-6-12</strain>
    </source>
</reference>
<sequence>MRKYDPIIVALDFPEERKALEVAEKIIPYVKNFKVGLELFSVAGPHIVKALKEMGTNVFIDLKLFDIPNTVVRTLDRLLTLDPFMVTLHILGGEEMLRESVKLVSQYKESNKTEYPYLLGVTVLTSFNEETLRRSWGISRSLPEQVLFLAQLAQETGLDGVIASPWEIELLRNNLRRPMLIVTPGIRLTKDKTDDQQRIMTPREALERGSDYLVIGRPITQSSDPYEVIRNIRSQIEDIVESRL</sequence>